<reference key="1">
    <citation type="journal article" date="2005" name="J. Bacteriol.">
        <title>Insights on evolution of virulence and resistance from the complete genome analysis of an early methicillin-resistant Staphylococcus aureus strain and a biofilm-producing methicillin-resistant Staphylococcus epidermidis strain.</title>
        <authorList>
            <person name="Gill S.R."/>
            <person name="Fouts D.E."/>
            <person name="Archer G.L."/>
            <person name="Mongodin E.F."/>
            <person name="DeBoy R.T."/>
            <person name="Ravel J."/>
            <person name="Paulsen I.T."/>
            <person name="Kolonay J.F."/>
            <person name="Brinkac L.M."/>
            <person name="Beanan M.J."/>
            <person name="Dodson R.J."/>
            <person name="Daugherty S.C."/>
            <person name="Madupu R."/>
            <person name="Angiuoli S.V."/>
            <person name="Durkin A.S."/>
            <person name="Haft D.H."/>
            <person name="Vamathevan J.J."/>
            <person name="Khouri H."/>
            <person name="Utterback T.R."/>
            <person name="Lee C."/>
            <person name="Dimitrov G."/>
            <person name="Jiang L."/>
            <person name="Qin H."/>
            <person name="Weidman J."/>
            <person name="Tran K."/>
            <person name="Kang K.H."/>
            <person name="Hance I.R."/>
            <person name="Nelson K.E."/>
            <person name="Fraser C.M."/>
        </authorList>
    </citation>
    <scope>NUCLEOTIDE SEQUENCE [LARGE SCALE GENOMIC DNA]</scope>
    <source>
        <strain>ATCC 35984 / DSM 28319 / BCRC 17069 / CCUG 31568 / BM 3577 / RP62A</strain>
    </source>
</reference>
<proteinExistence type="inferred from homology"/>
<dbReference type="EMBL" id="CP000029">
    <property type="protein sequence ID" value="AAW55161.1"/>
    <property type="molecule type" value="Genomic_DNA"/>
</dbReference>
<dbReference type="RefSeq" id="WP_001829755.1">
    <property type="nucleotide sequence ID" value="NC_002976.3"/>
</dbReference>
<dbReference type="SMR" id="Q5HM01"/>
<dbReference type="STRING" id="176279.SERP1829"/>
<dbReference type="GeneID" id="50018075"/>
<dbReference type="KEGG" id="ser:SERP1829"/>
<dbReference type="eggNOG" id="COG0089">
    <property type="taxonomic scope" value="Bacteria"/>
</dbReference>
<dbReference type="HOGENOM" id="CLU_037562_3_2_9"/>
<dbReference type="Proteomes" id="UP000000531">
    <property type="component" value="Chromosome"/>
</dbReference>
<dbReference type="GO" id="GO:1990904">
    <property type="term" value="C:ribonucleoprotein complex"/>
    <property type="evidence" value="ECO:0007669"/>
    <property type="project" value="UniProtKB-KW"/>
</dbReference>
<dbReference type="GO" id="GO:0005840">
    <property type="term" value="C:ribosome"/>
    <property type="evidence" value="ECO:0007669"/>
    <property type="project" value="UniProtKB-KW"/>
</dbReference>
<dbReference type="GO" id="GO:0019843">
    <property type="term" value="F:rRNA binding"/>
    <property type="evidence" value="ECO:0007669"/>
    <property type="project" value="UniProtKB-UniRule"/>
</dbReference>
<dbReference type="GO" id="GO:0003735">
    <property type="term" value="F:structural constituent of ribosome"/>
    <property type="evidence" value="ECO:0007669"/>
    <property type="project" value="InterPro"/>
</dbReference>
<dbReference type="GO" id="GO:0006412">
    <property type="term" value="P:translation"/>
    <property type="evidence" value="ECO:0007669"/>
    <property type="project" value="UniProtKB-UniRule"/>
</dbReference>
<dbReference type="FunFam" id="3.30.70.330:FF:000001">
    <property type="entry name" value="50S ribosomal protein L23"/>
    <property type="match status" value="1"/>
</dbReference>
<dbReference type="Gene3D" id="3.30.70.330">
    <property type="match status" value="1"/>
</dbReference>
<dbReference type="HAMAP" id="MF_01369_B">
    <property type="entry name" value="Ribosomal_uL23_B"/>
    <property type="match status" value="1"/>
</dbReference>
<dbReference type="InterPro" id="IPR012677">
    <property type="entry name" value="Nucleotide-bd_a/b_plait_sf"/>
</dbReference>
<dbReference type="InterPro" id="IPR013025">
    <property type="entry name" value="Ribosomal_uL23-like"/>
</dbReference>
<dbReference type="InterPro" id="IPR012678">
    <property type="entry name" value="Ribosomal_uL23/eL15/eS24_sf"/>
</dbReference>
<dbReference type="NCBIfam" id="NF004363">
    <property type="entry name" value="PRK05738.2-4"/>
    <property type="match status" value="1"/>
</dbReference>
<dbReference type="PANTHER" id="PTHR11620">
    <property type="entry name" value="60S RIBOSOMAL PROTEIN L23A"/>
    <property type="match status" value="1"/>
</dbReference>
<dbReference type="Pfam" id="PF00276">
    <property type="entry name" value="Ribosomal_L23"/>
    <property type="match status" value="1"/>
</dbReference>
<dbReference type="SUPFAM" id="SSF54189">
    <property type="entry name" value="Ribosomal proteins S24e, L23 and L15e"/>
    <property type="match status" value="1"/>
</dbReference>
<evidence type="ECO:0000255" key="1">
    <source>
        <dbReference type="HAMAP-Rule" id="MF_01369"/>
    </source>
</evidence>
<evidence type="ECO:0000305" key="2"/>
<feature type="chain" id="PRO_0000224176" description="Large ribosomal subunit protein uL23">
    <location>
        <begin position="1"/>
        <end position="91"/>
    </location>
</feature>
<comment type="function">
    <text evidence="1">One of the early assembly proteins it binds 23S rRNA. One of the proteins that surrounds the polypeptide exit tunnel on the outside of the ribosome. Forms the main docking site for trigger factor binding to the ribosome.</text>
</comment>
<comment type="subunit">
    <text evidence="1">Part of the 50S ribosomal subunit. Contacts protein L29, and trigger factor when it is bound to the ribosome.</text>
</comment>
<comment type="similarity">
    <text evidence="1">Belongs to the universal ribosomal protein uL23 family.</text>
</comment>
<sequence>MEARDVLKRPVITEKSSEAMAEDKYTFDVDTRANKTQVKIAVEEIFDVKVDSVNIINYKPKKKRMGRYQGYTNKRRKAIVKLKEGSIDLFN</sequence>
<gene>
    <name evidence="1" type="primary">rplW</name>
    <name type="ordered locus">SERP1829</name>
</gene>
<accession>Q5HM01</accession>
<protein>
    <recommendedName>
        <fullName evidence="1">Large ribosomal subunit protein uL23</fullName>
    </recommendedName>
    <alternativeName>
        <fullName evidence="2">50S ribosomal protein L23</fullName>
    </alternativeName>
</protein>
<keyword id="KW-1185">Reference proteome</keyword>
<keyword id="KW-0687">Ribonucleoprotein</keyword>
<keyword id="KW-0689">Ribosomal protein</keyword>
<keyword id="KW-0694">RNA-binding</keyword>
<keyword id="KW-0699">rRNA-binding</keyword>
<name>RL23_STAEQ</name>
<organism>
    <name type="scientific">Staphylococcus epidermidis (strain ATCC 35984 / DSM 28319 / BCRC 17069 / CCUG 31568 / BM 3577 / RP62A)</name>
    <dbReference type="NCBI Taxonomy" id="176279"/>
    <lineage>
        <taxon>Bacteria</taxon>
        <taxon>Bacillati</taxon>
        <taxon>Bacillota</taxon>
        <taxon>Bacilli</taxon>
        <taxon>Bacillales</taxon>
        <taxon>Staphylococcaceae</taxon>
        <taxon>Staphylococcus</taxon>
    </lineage>
</organism>